<proteinExistence type="evidence at protein level"/>
<protein>
    <recommendedName>
        <fullName evidence="7">Protein IQ-DOMAIN 32</fullName>
        <shortName evidence="7">AtIQD32</shortName>
    </recommendedName>
</protein>
<name>IQD32_ARATH</name>
<sequence>MGRSPASSCLRLISCSGGDDTSADPNSTALENKSSGDKRGWSFRKKSGKQRGLITSVVSETTPASRTRETLESALLKSPSPDNNNVSEKQQQSFSVDEKKSQLPVVTYVAEPVDEKKTQSVIEEKTELLSVEEQIDHRTEVSPVIVESKGTETEEDDLIGTELQGPSAADAAKIEEDVTSEVEMASKVEPEESESDDVIIVRKESDEKVDEKLDESVIVVIQAAVRGFLARRELLRSKKVIKLQAAVRGHLVRSQAMGSLRCVQAIVKMQAMVRARHSTKDGSRVSATSDKSEPNAAAQKLLENKFAKHLMESTPKTKPINIKCDPTKPSSAWNWLERWMSVPKPEKTSKANLTTEEQNLEETQNVKISPQADFVNSDSTVENKTETDMPSYEASKVEGQNVELSETEKMSQYDSPEASAEVYYDSIQSQPLAAKPDSLLEEPEYVDGQIKHSLKRKVSNPSFIAAQSKFEELTSSTGSNKAMTLSSKDDVLGEEGKTDIDSPDTTNTIKDHSLEDVTPAELSGSECGTELSVTSSLDTLEKKSDAEGAEPRVEAKLLEDDTFKTDQAELIEIDVKDATSMGTVEDPKEKVENAKDEVEISATHHEPVISTPDSKKRRAEDESGPQAYALSEGALTPMTITESQATPASQASSSVKARKGKSEKSGSSQKRKVSKKITSSPKQEIGTGEATEQEEGKEQKSGRRTSFGYDQEARESSGGKNSLPRFMQPTQSAKAKVQEHNSPRSSPDLQERDVVSAKKRHSLPGVTNGKQVSPRIQRSASQAQQGTKDRKWQR</sequence>
<organism>
    <name type="scientific">Arabidopsis thaliana</name>
    <name type="common">Mouse-ear cress</name>
    <dbReference type="NCBI Taxonomy" id="3702"/>
    <lineage>
        <taxon>Eukaryota</taxon>
        <taxon>Viridiplantae</taxon>
        <taxon>Streptophyta</taxon>
        <taxon>Embryophyta</taxon>
        <taxon>Tracheophyta</taxon>
        <taxon>Spermatophyta</taxon>
        <taxon>Magnoliopsida</taxon>
        <taxon>eudicotyledons</taxon>
        <taxon>Gunneridae</taxon>
        <taxon>Pentapetalae</taxon>
        <taxon>rosids</taxon>
        <taxon>malvids</taxon>
        <taxon>Brassicales</taxon>
        <taxon>Brassicaceae</taxon>
        <taxon>Camelineae</taxon>
        <taxon>Arabidopsis</taxon>
    </lineage>
</organism>
<reference key="1">
    <citation type="journal article" date="2000" name="Nature">
        <title>Sequence and analysis of chromosome 1 of the plant Arabidopsis thaliana.</title>
        <authorList>
            <person name="Theologis A."/>
            <person name="Ecker J.R."/>
            <person name="Palm C.J."/>
            <person name="Federspiel N.A."/>
            <person name="Kaul S."/>
            <person name="White O."/>
            <person name="Alonso J."/>
            <person name="Altafi H."/>
            <person name="Araujo R."/>
            <person name="Bowman C.L."/>
            <person name="Brooks S.Y."/>
            <person name="Buehler E."/>
            <person name="Chan A."/>
            <person name="Chao Q."/>
            <person name="Chen H."/>
            <person name="Cheuk R.F."/>
            <person name="Chin C.W."/>
            <person name="Chung M.K."/>
            <person name="Conn L."/>
            <person name="Conway A.B."/>
            <person name="Conway A.R."/>
            <person name="Creasy T.H."/>
            <person name="Dewar K."/>
            <person name="Dunn P."/>
            <person name="Etgu P."/>
            <person name="Feldblyum T.V."/>
            <person name="Feng J.-D."/>
            <person name="Fong B."/>
            <person name="Fujii C.Y."/>
            <person name="Gill J.E."/>
            <person name="Goldsmith A.D."/>
            <person name="Haas B."/>
            <person name="Hansen N.F."/>
            <person name="Hughes B."/>
            <person name="Huizar L."/>
            <person name="Hunter J.L."/>
            <person name="Jenkins J."/>
            <person name="Johnson-Hopson C."/>
            <person name="Khan S."/>
            <person name="Khaykin E."/>
            <person name="Kim C.J."/>
            <person name="Koo H.L."/>
            <person name="Kremenetskaia I."/>
            <person name="Kurtz D.B."/>
            <person name="Kwan A."/>
            <person name="Lam B."/>
            <person name="Langin-Hooper S."/>
            <person name="Lee A."/>
            <person name="Lee J.M."/>
            <person name="Lenz C.A."/>
            <person name="Li J.H."/>
            <person name="Li Y.-P."/>
            <person name="Lin X."/>
            <person name="Liu S.X."/>
            <person name="Liu Z.A."/>
            <person name="Luros J.S."/>
            <person name="Maiti R."/>
            <person name="Marziali A."/>
            <person name="Militscher J."/>
            <person name="Miranda M."/>
            <person name="Nguyen M."/>
            <person name="Nierman W.C."/>
            <person name="Osborne B.I."/>
            <person name="Pai G."/>
            <person name="Peterson J."/>
            <person name="Pham P.K."/>
            <person name="Rizzo M."/>
            <person name="Rooney T."/>
            <person name="Rowley D."/>
            <person name="Sakano H."/>
            <person name="Salzberg S.L."/>
            <person name="Schwartz J.R."/>
            <person name="Shinn P."/>
            <person name="Southwick A.M."/>
            <person name="Sun H."/>
            <person name="Tallon L.J."/>
            <person name="Tambunga G."/>
            <person name="Toriumi M.J."/>
            <person name="Town C.D."/>
            <person name="Utterback T."/>
            <person name="Van Aken S."/>
            <person name="Vaysberg M."/>
            <person name="Vysotskaia V.S."/>
            <person name="Walker M."/>
            <person name="Wu D."/>
            <person name="Yu G."/>
            <person name="Fraser C.M."/>
            <person name="Venter J.C."/>
            <person name="Davis R.W."/>
        </authorList>
    </citation>
    <scope>NUCLEOTIDE SEQUENCE [LARGE SCALE GENOMIC DNA]</scope>
    <source>
        <strain>cv. Columbia</strain>
    </source>
</reference>
<reference key="2">
    <citation type="journal article" date="2017" name="Plant J.">
        <title>Araport11: a complete reannotation of the Arabidopsis thaliana reference genome.</title>
        <authorList>
            <person name="Cheng C.Y."/>
            <person name="Krishnakumar V."/>
            <person name="Chan A.P."/>
            <person name="Thibaud-Nissen F."/>
            <person name="Schobel S."/>
            <person name="Town C.D."/>
        </authorList>
    </citation>
    <scope>GENOME REANNOTATION</scope>
    <source>
        <strain>cv. Columbia</strain>
    </source>
</reference>
<reference key="3">
    <citation type="journal article" date="2003" name="Science">
        <title>Empirical analysis of transcriptional activity in the Arabidopsis genome.</title>
        <authorList>
            <person name="Yamada K."/>
            <person name="Lim J."/>
            <person name="Dale J.M."/>
            <person name="Chen H."/>
            <person name="Shinn P."/>
            <person name="Palm C.J."/>
            <person name="Southwick A.M."/>
            <person name="Wu H.C."/>
            <person name="Kim C.J."/>
            <person name="Nguyen M."/>
            <person name="Pham P.K."/>
            <person name="Cheuk R.F."/>
            <person name="Karlin-Newmann G."/>
            <person name="Liu S.X."/>
            <person name="Lam B."/>
            <person name="Sakano H."/>
            <person name="Wu T."/>
            <person name="Yu G."/>
            <person name="Miranda M."/>
            <person name="Quach H.L."/>
            <person name="Tripp M."/>
            <person name="Chang C.H."/>
            <person name="Lee J.M."/>
            <person name="Toriumi M.J."/>
            <person name="Chan M.M."/>
            <person name="Tang C.C."/>
            <person name="Onodera C.S."/>
            <person name="Deng J.M."/>
            <person name="Akiyama K."/>
            <person name="Ansari Y."/>
            <person name="Arakawa T."/>
            <person name="Banh J."/>
            <person name="Banno F."/>
            <person name="Bowser L."/>
            <person name="Brooks S.Y."/>
            <person name="Carninci P."/>
            <person name="Chao Q."/>
            <person name="Choy N."/>
            <person name="Enju A."/>
            <person name="Goldsmith A.D."/>
            <person name="Gurjal M."/>
            <person name="Hansen N.F."/>
            <person name="Hayashizaki Y."/>
            <person name="Johnson-Hopson C."/>
            <person name="Hsuan V.W."/>
            <person name="Iida K."/>
            <person name="Karnes M."/>
            <person name="Khan S."/>
            <person name="Koesema E."/>
            <person name="Ishida J."/>
            <person name="Jiang P.X."/>
            <person name="Jones T."/>
            <person name="Kawai J."/>
            <person name="Kamiya A."/>
            <person name="Meyers C."/>
            <person name="Nakajima M."/>
            <person name="Narusaka M."/>
            <person name="Seki M."/>
            <person name="Sakurai T."/>
            <person name="Satou M."/>
            <person name="Tamse R."/>
            <person name="Vaysberg M."/>
            <person name="Wallender E.K."/>
            <person name="Wong C."/>
            <person name="Yamamura Y."/>
            <person name="Yuan S."/>
            <person name="Shinozaki K."/>
            <person name="Davis R.W."/>
            <person name="Theologis A."/>
            <person name="Ecker J.R."/>
        </authorList>
    </citation>
    <scope>NUCLEOTIDE SEQUENCE [LARGE SCALE MRNA]</scope>
    <source>
        <strain>cv. Columbia</strain>
    </source>
</reference>
<reference key="4">
    <citation type="submission" date="2002-03" db="EMBL/GenBank/DDBJ databases">
        <title>Full-length cDNA from Arabidopsis thaliana.</title>
        <authorList>
            <person name="Brover V.V."/>
            <person name="Troukhan M.E."/>
            <person name="Alexandrov N.A."/>
            <person name="Lu Y.-P."/>
            <person name="Flavell R.B."/>
            <person name="Feldmann K.A."/>
        </authorList>
    </citation>
    <scope>NUCLEOTIDE SEQUENCE [LARGE SCALE MRNA] OF 476-794</scope>
</reference>
<reference key="5">
    <citation type="submission" date="2005-03" db="EMBL/GenBank/DDBJ databases">
        <title>Large-scale analysis of RIKEN Arabidopsis full-length (RAFL) cDNAs.</title>
        <authorList>
            <person name="Totoki Y."/>
            <person name="Seki M."/>
            <person name="Ishida J."/>
            <person name="Nakajima M."/>
            <person name="Enju A."/>
            <person name="Kamiya A."/>
            <person name="Narusaka M."/>
            <person name="Shin-i T."/>
            <person name="Nakagawa M."/>
            <person name="Sakamoto N."/>
            <person name="Oishi K."/>
            <person name="Kohara Y."/>
            <person name="Kobayashi M."/>
            <person name="Toyoda A."/>
            <person name="Sakaki Y."/>
            <person name="Sakurai T."/>
            <person name="Iida K."/>
            <person name="Akiyama K."/>
            <person name="Satou M."/>
            <person name="Toyoda T."/>
            <person name="Konagaya A."/>
            <person name="Carninci P."/>
            <person name="Kawai J."/>
            <person name="Hayashizaki Y."/>
            <person name="Shinozaki K."/>
        </authorList>
    </citation>
    <scope>NUCLEOTIDE SEQUENCE [LARGE SCALE MRNA] OF 711-794</scope>
    <source>
        <strain>cv. Columbia</strain>
    </source>
</reference>
<reference key="6">
    <citation type="journal article" date="2003" name="Mol. Cell. Proteomics">
        <title>Large-scale analysis of in vivo phosphorylated membrane proteins by immobilized metal ion affinity chromatography and mass spectrometry.</title>
        <authorList>
            <person name="Nuehse T.S."/>
            <person name="Stensballe A."/>
            <person name="Jensen O.N."/>
            <person name="Peck S.C."/>
        </authorList>
    </citation>
    <scope>PHOSPHORYLATION [LARGE SCALE ANALYSIS] AT SER-193 AND SER-195</scope>
    <scope>IDENTIFICATION BY MASS SPECTROMETRY [LARGE SCALE ANALYSIS]</scope>
    <source>
        <strain>cv. La-0</strain>
    </source>
</reference>
<reference key="7">
    <citation type="journal article" date="2004" name="Plant Cell">
        <title>Phosphoproteomics of the Arabidopsis plasma membrane and a new phosphorylation site database.</title>
        <authorList>
            <person name="Nuehse T.S."/>
            <person name="Stensballe A."/>
            <person name="Jensen O.N."/>
            <person name="Peck S.C."/>
        </authorList>
    </citation>
    <scope>PHOSPHORYLATION [LARGE SCALE ANALYSIS] AT SER-193 AND SER-195</scope>
    <scope>IDENTIFICATION BY MASS SPECTROMETRY [LARGE SCALE ANALYSIS]</scope>
</reference>
<reference key="8">
    <citation type="journal article" date="2005" name="BMC Evol. Biol.">
        <title>Genome-wide comparative analysis of the IQD gene families in Arabidopsis thaliana and Oryza sativa.</title>
        <authorList>
            <person name="Abel S."/>
            <person name="Savchenko T."/>
            <person name="Levy M."/>
        </authorList>
    </citation>
    <scope>INTERACTION WITH CALMODULIN</scope>
    <scope>GENE FAMILY</scope>
    <scope>NOMENCLATURE</scope>
</reference>
<reference key="9">
    <citation type="journal article" date="2007" name="Mol. Cell. Proteomics">
        <title>Temporal analysis of sucrose-induced phosphorylation changes in plasma membrane proteins of Arabidopsis.</title>
        <authorList>
            <person name="Niittylae T."/>
            <person name="Fuglsang A.T."/>
            <person name="Palmgren M.G."/>
            <person name="Frommer W.B."/>
            <person name="Schulze W.X."/>
        </authorList>
    </citation>
    <scope>IDENTIFICATION BY MASS SPECTROMETRY [LARGE SCALE ANALYSIS]</scope>
    <source>
        <tissue>Seedling</tissue>
    </source>
</reference>
<reference key="10">
    <citation type="journal article" date="2008" name="J. Proteome Res.">
        <title>Site-specific phosphorylation profiling of Arabidopsis proteins by mass spectrometry and peptide chip analysis.</title>
        <authorList>
            <person name="de la Fuente van Bentem S."/>
            <person name="Anrather D."/>
            <person name="Dohnal I."/>
            <person name="Roitinger E."/>
            <person name="Csaszar E."/>
            <person name="Joore J."/>
            <person name="Buijnink J."/>
            <person name="Carreri A."/>
            <person name="Forzani C."/>
            <person name="Lorkovic Z.J."/>
            <person name="Barta A."/>
            <person name="Lecourieux D."/>
            <person name="Verhounig A."/>
            <person name="Jonak C."/>
            <person name="Hirt H."/>
        </authorList>
    </citation>
    <scope>PHOSPHORYLATION [LARGE SCALE ANALYSIS] AT SER-78; SER-80; SER-459 AND SER-502</scope>
    <scope>IDENTIFICATION BY MASS SPECTROMETRY [LARGE SCALE ANALYSIS]</scope>
    <source>
        <tissue>Root</tissue>
    </source>
</reference>
<reference key="11">
    <citation type="journal article" date="2009" name="J. Proteomics">
        <title>Phosphoproteomic analysis of nuclei-enriched fractions from Arabidopsis thaliana.</title>
        <authorList>
            <person name="Jones A.M.E."/>
            <person name="MacLean D."/>
            <person name="Studholme D.J."/>
            <person name="Serna-Sanz A."/>
            <person name="Andreasson E."/>
            <person name="Rathjen J.P."/>
            <person name="Peck S.C."/>
        </authorList>
    </citation>
    <scope>PHOSPHORYLATION [LARGE SCALE ANALYSIS] AT SER-369 AND SER-459</scope>
    <scope>IDENTIFICATION BY MASS SPECTROMETRY [LARGE SCALE ANALYSIS]</scope>
    <source>
        <strain>cv. Columbia</strain>
    </source>
</reference>
<reference key="12">
    <citation type="journal article" date="2009" name="Plant Physiol.">
        <title>Large-scale Arabidopsis phosphoproteome profiling reveals novel chloroplast kinase substrates and phosphorylation networks.</title>
        <authorList>
            <person name="Reiland S."/>
            <person name="Messerli G."/>
            <person name="Baerenfaller K."/>
            <person name="Gerrits B."/>
            <person name="Endler A."/>
            <person name="Grossmann J."/>
            <person name="Gruissem W."/>
            <person name="Baginsky S."/>
        </authorList>
    </citation>
    <scope>PHOSPHORYLATION [LARGE SCALE ANALYSIS] AT SER-142; SER-193; SER-459 AND SER-544</scope>
    <scope>IDENTIFICATION BY MASS SPECTROMETRY [LARGE SCALE ANALYSIS]</scope>
</reference>
<reference key="13">
    <citation type="journal article" date="2013" name="Plant Physiol.">
        <title>Purification and characterization of novel microtubule-associated proteins from Arabidopsis cell suspension cultures.</title>
        <authorList>
            <person name="Hamada T."/>
            <person name="Nagasaki-Takeuchi N."/>
            <person name="Kato T."/>
            <person name="Fujiwara M."/>
            <person name="Sonobe S."/>
            <person name="Fukao Y."/>
            <person name="Hashimoto T."/>
        </authorList>
    </citation>
    <scope>SUBCELLULAR LOCATION</scope>
</reference>
<reference key="14">
    <citation type="journal article" date="2017" name="Plant Physiol.">
        <title>The IQD family of calmodulin-binding proteins links calcium signaling to microtubules, membrane subdomains, and the nucleus.</title>
        <authorList>
            <person name="Buerstenbinder K."/>
            <person name="Moeller B."/>
            <person name="Ploetner R."/>
            <person name="Stamm G."/>
            <person name="Hause G."/>
            <person name="Mitra D."/>
            <person name="Abel S."/>
        </authorList>
    </citation>
    <scope>SUBCELLULAR LOCATION</scope>
    <scope>INTERACTION WITH CALMODULIN</scope>
    <source>
        <strain>cv. Columbia</strain>
    </source>
</reference>
<reference key="15">
    <citation type="journal article" date="2017" name="Plant Signal. Behav.">
        <title>Functions of IQD proteins as hubs in cellular calcium and auxin signaling: A toolbox for shape formation and tissue-specification in plants?</title>
        <authorList>
            <person name="Buerstenbinder K."/>
            <person name="Mitra D."/>
            <person name="Quegwer J."/>
        </authorList>
    </citation>
    <scope>REVIEW</scope>
</reference>
<accession>Q9FXI5</accession>
<accession>Q570I0</accession>
<accession>Q8LFD0</accession>
<accession>Q8LPF6</accession>
<evidence type="ECO:0000250" key="1">
    <source>
        <dbReference type="UniProtKB" id="Q9SF32"/>
    </source>
</evidence>
<evidence type="ECO:0000255" key="2">
    <source>
        <dbReference type="PROSITE-ProRule" id="PRU00116"/>
    </source>
</evidence>
<evidence type="ECO:0000255" key="3">
    <source>
        <dbReference type="PROSITE-ProRule" id="PRU00768"/>
    </source>
</evidence>
<evidence type="ECO:0000256" key="4">
    <source>
        <dbReference type="SAM" id="MobiDB-lite"/>
    </source>
</evidence>
<evidence type="ECO:0000269" key="5">
    <source>
    </source>
</evidence>
<evidence type="ECO:0000269" key="6">
    <source>
    </source>
</evidence>
<evidence type="ECO:0000303" key="7">
    <source>
    </source>
</evidence>
<evidence type="ECO:0000305" key="8"/>
<evidence type="ECO:0000312" key="9">
    <source>
        <dbReference type="Araport" id="AT1G19870"/>
    </source>
</evidence>
<evidence type="ECO:0000312" key="10">
    <source>
        <dbReference type="EMBL" id="AAG12559.1"/>
    </source>
</evidence>
<evidence type="ECO:0007744" key="11">
    <source>
    </source>
</evidence>
<evidence type="ECO:0007744" key="12">
    <source>
    </source>
</evidence>
<evidence type="ECO:0007744" key="13">
    <source>
    </source>
</evidence>
<evidence type="ECO:0007744" key="14">
    <source>
    </source>
</evidence>
<evidence type="ECO:0007744" key="15">
    <source>
    </source>
</evidence>
<dbReference type="EMBL" id="AC007797">
    <property type="protein sequence ID" value="AAG12559.1"/>
    <property type="status" value="ALT_SEQ"/>
    <property type="molecule type" value="Genomic_DNA"/>
</dbReference>
<dbReference type="EMBL" id="CP002684">
    <property type="protein sequence ID" value="AEE29908.1"/>
    <property type="molecule type" value="Genomic_DNA"/>
</dbReference>
<dbReference type="EMBL" id="AY102110">
    <property type="protein sequence ID" value="AAM26680.1"/>
    <property type="molecule type" value="mRNA"/>
</dbReference>
<dbReference type="EMBL" id="BT001081">
    <property type="protein sequence ID" value="AAN46862.1"/>
    <property type="molecule type" value="mRNA"/>
</dbReference>
<dbReference type="EMBL" id="AY084918">
    <property type="protein sequence ID" value="AAM61480.1"/>
    <property type="status" value="ALT_INIT"/>
    <property type="molecule type" value="mRNA"/>
</dbReference>
<dbReference type="EMBL" id="AK220728">
    <property type="protein sequence ID" value="BAD93867.1"/>
    <property type="molecule type" value="mRNA"/>
</dbReference>
<dbReference type="PIR" id="A86332">
    <property type="entry name" value="A86332"/>
</dbReference>
<dbReference type="RefSeq" id="NP_564097.1">
    <property type="nucleotide sequence ID" value="NM_101842.5"/>
</dbReference>
<dbReference type="BioGRID" id="23814">
    <property type="interactions" value="3"/>
</dbReference>
<dbReference type="FunCoup" id="Q9FXI5">
    <property type="interactions" value="2322"/>
</dbReference>
<dbReference type="STRING" id="3702.Q9FXI5"/>
<dbReference type="GlyGen" id="Q9FXI5">
    <property type="glycosylation" value="1 site"/>
</dbReference>
<dbReference type="iPTMnet" id="Q9FXI5"/>
<dbReference type="SwissPalm" id="Q9FXI5"/>
<dbReference type="PaxDb" id="3702-AT1G19870.1"/>
<dbReference type="ProteomicsDB" id="228740"/>
<dbReference type="EnsemblPlants" id="AT1G19870.1">
    <property type="protein sequence ID" value="AT1G19870.1"/>
    <property type="gene ID" value="AT1G19870"/>
</dbReference>
<dbReference type="GeneID" id="838575"/>
<dbReference type="Gramene" id="AT1G19870.1">
    <property type="protein sequence ID" value="AT1G19870.1"/>
    <property type="gene ID" value="AT1G19870"/>
</dbReference>
<dbReference type="KEGG" id="ath:AT1G19870"/>
<dbReference type="Araport" id="AT1G19870"/>
<dbReference type="TAIR" id="AT1G19870">
    <property type="gene designation" value="IQD32"/>
</dbReference>
<dbReference type="eggNOG" id="KOG1075">
    <property type="taxonomic scope" value="Eukaryota"/>
</dbReference>
<dbReference type="HOGENOM" id="CLU_019543_0_0_1"/>
<dbReference type="InParanoid" id="Q9FXI5"/>
<dbReference type="OMA" id="NSVPHFM"/>
<dbReference type="CD-CODE" id="4299E36E">
    <property type="entry name" value="Nucleolus"/>
</dbReference>
<dbReference type="PRO" id="PR:Q9FXI5"/>
<dbReference type="Proteomes" id="UP000006548">
    <property type="component" value="Chromosome 1"/>
</dbReference>
<dbReference type="ExpressionAtlas" id="Q9FXI5">
    <property type="expression patterns" value="baseline and differential"/>
</dbReference>
<dbReference type="GO" id="GO:0009941">
    <property type="term" value="C:chloroplast envelope"/>
    <property type="evidence" value="ECO:0007005"/>
    <property type="project" value="TAIR"/>
</dbReference>
<dbReference type="GO" id="GO:0005875">
    <property type="term" value="C:microtubule associated complex"/>
    <property type="evidence" value="ECO:0000314"/>
    <property type="project" value="TAIR"/>
</dbReference>
<dbReference type="GO" id="GO:0005634">
    <property type="term" value="C:nucleus"/>
    <property type="evidence" value="ECO:0007005"/>
    <property type="project" value="TAIR"/>
</dbReference>
<dbReference type="GO" id="GO:0005886">
    <property type="term" value="C:plasma membrane"/>
    <property type="evidence" value="ECO:0007005"/>
    <property type="project" value="TAIR"/>
</dbReference>
<dbReference type="GO" id="GO:0005516">
    <property type="term" value="F:calmodulin binding"/>
    <property type="evidence" value="ECO:0007669"/>
    <property type="project" value="UniProtKB-KW"/>
</dbReference>
<dbReference type="Gene3D" id="1.20.5.190">
    <property type="match status" value="1"/>
</dbReference>
<dbReference type="InterPro" id="IPR025064">
    <property type="entry name" value="DUF4005"/>
</dbReference>
<dbReference type="InterPro" id="IPR000048">
    <property type="entry name" value="IQ_motif_EF-hand-BS"/>
</dbReference>
<dbReference type="PANTHER" id="PTHR32295">
    <property type="entry name" value="IQ-DOMAIN 5-RELATED"/>
    <property type="match status" value="1"/>
</dbReference>
<dbReference type="PANTHER" id="PTHR32295:SF154">
    <property type="entry name" value="PROTEIN IQ-DOMAIN 32"/>
    <property type="match status" value="1"/>
</dbReference>
<dbReference type="Pfam" id="PF13178">
    <property type="entry name" value="DUF4005"/>
    <property type="match status" value="1"/>
</dbReference>
<dbReference type="Pfam" id="PF00612">
    <property type="entry name" value="IQ"/>
    <property type="match status" value="2"/>
</dbReference>
<dbReference type="SMART" id="SM00015">
    <property type="entry name" value="IQ"/>
    <property type="match status" value="2"/>
</dbReference>
<dbReference type="PROSITE" id="PS50096">
    <property type="entry name" value="IQ"/>
    <property type="match status" value="2"/>
</dbReference>
<gene>
    <name evidence="7" type="primary">IQD32</name>
    <name evidence="9" type="ordered locus">At1g19870</name>
    <name evidence="10" type="ORF">F6F9.8</name>
</gene>
<comment type="function">
    <text evidence="1">May be involved in cooperative interactions with calmodulins or calmodulin-like proteins (By similarity). Recruits calmodulin proteins to microtubules, thus being a potential scaffold in cellular signaling and trafficking (By similarity). May associate with nucleic acids and regulate gene expression at the transcriptional or post-transcriptional level (By similarity).</text>
</comment>
<comment type="subunit">
    <text evidence="1">Binds to multiple calmodulin (CaM) in the presence of Ca(2+) and CaM-like proteins.</text>
</comment>
<comment type="subcellular location">
    <subcellularLocation>
        <location evidence="3 6">Nucleus</location>
    </subcellularLocation>
    <subcellularLocation>
        <location evidence="5 6">Cytoplasm</location>
        <location evidence="5 6">Cytoskeleton</location>
    </subcellularLocation>
    <text evidence="5 6">Associates to cortical microtubules (MTs) (PubMed:24134884). Recruits calmodulin (CaM2) to microtubules (PubMed:28115582).</text>
</comment>
<comment type="similarity">
    <text evidence="8">Belongs to the IQD family.</text>
</comment>
<comment type="sequence caution" evidence="8">
    <conflict type="erroneous gene model prediction">
        <sequence resource="EMBL-CDS" id="AAG12559"/>
    </conflict>
</comment>
<comment type="sequence caution" evidence="8">
    <conflict type="erroneous initiation">
        <sequence resource="EMBL-CDS" id="AAM61480"/>
    </conflict>
</comment>
<feature type="chain" id="PRO_0000317069" description="Protein IQ-DOMAIN 32">
    <location>
        <begin position="1"/>
        <end position="794"/>
    </location>
</feature>
<feature type="domain" description="IQ 1" evidence="2">
    <location>
        <begin position="214"/>
        <end position="242"/>
    </location>
</feature>
<feature type="domain" description="IQ 2" evidence="2">
    <location>
        <begin position="243"/>
        <end position="265"/>
    </location>
</feature>
<feature type="region of interest" description="Disordered" evidence="4">
    <location>
        <begin position="15"/>
        <end position="101"/>
    </location>
</feature>
<feature type="region of interest" description="Calmodulin-binding" evidence="7">
    <location>
        <begin position="230"/>
        <end position="241"/>
    </location>
</feature>
<feature type="region of interest" description="Disordered" evidence="4">
    <location>
        <begin position="277"/>
        <end position="296"/>
    </location>
</feature>
<feature type="region of interest" description="Disordered" evidence="4">
    <location>
        <begin position="375"/>
        <end position="417"/>
    </location>
</feature>
<feature type="region of interest" description="Disordered" evidence="4">
    <location>
        <begin position="472"/>
        <end position="555"/>
    </location>
</feature>
<feature type="region of interest" description="Disordered" evidence="4">
    <location>
        <begin position="578"/>
        <end position="794"/>
    </location>
</feature>
<feature type="short sequence motif" description="Nuclear localization signal" evidence="3">
    <location>
        <begin position="657"/>
        <end position="664"/>
    </location>
</feature>
<feature type="compositionally biased region" description="Polar residues" evidence="4">
    <location>
        <begin position="23"/>
        <end position="33"/>
    </location>
</feature>
<feature type="compositionally biased region" description="Polar residues" evidence="4">
    <location>
        <begin position="56"/>
        <end position="65"/>
    </location>
</feature>
<feature type="compositionally biased region" description="Polar residues" evidence="4">
    <location>
        <begin position="80"/>
        <end position="95"/>
    </location>
</feature>
<feature type="compositionally biased region" description="Polar residues" evidence="4">
    <location>
        <begin position="473"/>
        <end position="486"/>
    </location>
</feature>
<feature type="compositionally biased region" description="Basic and acidic residues" evidence="4">
    <location>
        <begin position="487"/>
        <end position="500"/>
    </location>
</feature>
<feature type="compositionally biased region" description="Basic and acidic residues" evidence="4">
    <location>
        <begin position="539"/>
        <end position="555"/>
    </location>
</feature>
<feature type="compositionally biased region" description="Basic and acidic residues" evidence="4">
    <location>
        <begin position="585"/>
        <end position="607"/>
    </location>
</feature>
<feature type="compositionally biased region" description="Low complexity" evidence="4">
    <location>
        <begin position="643"/>
        <end position="654"/>
    </location>
</feature>
<feature type="compositionally biased region" description="Polar residues" evidence="4">
    <location>
        <begin position="768"/>
        <end position="786"/>
    </location>
</feature>
<feature type="modified residue" description="Phosphoserine" evidence="13">
    <location>
        <position position="78"/>
    </location>
</feature>
<feature type="modified residue" description="Phosphoserine" evidence="13">
    <location>
        <position position="80"/>
    </location>
</feature>
<feature type="modified residue" description="Phosphoserine" evidence="15">
    <location>
        <position position="142"/>
    </location>
</feature>
<feature type="modified residue" description="Phosphoserine" evidence="11 12 15">
    <location>
        <position position="193"/>
    </location>
</feature>
<feature type="modified residue" description="Phosphoserine" evidence="11 12">
    <location>
        <position position="195"/>
    </location>
</feature>
<feature type="modified residue" description="Phosphoserine" evidence="14">
    <location>
        <position position="369"/>
    </location>
</feature>
<feature type="modified residue" description="Phosphoserine" evidence="13 14 15">
    <location>
        <position position="459"/>
    </location>
</feature>
<feature type="modified residue" description="Phosphoserine" evidence="13">
    <location>
        <position position="502"/>
    </location>
</feature>
<feature type="modified residue" description="Phosphoserine" evidence="15">
    <location>
        <position position="544"/>
    </location>
</feature>
<feature type="sequence conflict" description="In Ref. 3; AAM26680/AAN46862." evidence="8" ref="3">
    <original>E</original>
    <variation>G</variation>
    <location>
        <position position="357"/>
    </location>
</feature>
<feature type="sequence conflict" description="In Ref. 4; AAM61480." evidence="8" ref="4">
    <original>G</original>
    <variation>W</variation>
    <location>
        <position position="769"/>
    </location>
</feature>
<keyword id="KW-0112">Calmodulin-binding</keyword>
<keyword id="KW-0963">Cytoplasm</keyword>
<keyword id="KW-0206">Cytoskeleton</keyword>
<keyword id="KW-0539">Nucleus</keyword>
<keyword id="KW-0597">Phosphoprotein</keyword>
<keyword id="KW-1185">Reference proteome</keyword>
<keyword id="KW-0677">Repeat</keyword>